<protein>
    <recommendedName>
        <fullName evidence="1">Lysophospholipid transporter LplT</fullName>
    </recommendedName>
</protein>
<comment type="function">
    <text evidence="1">Catalyzes the facilitated diffusion of 2-acyl-glycero-3-phosphoethanolamine (2-acyl-GPE) into the cell.</text>
</comment>
<comment type="subcellular location">
    <subcellularLocation>
        <location evidence="1">Cell inner membrane</location>
        <topology evidence="1">Multi-pass membrane protein</topology>
    </subcellularLocation>
</comment>
<comment type="similarity">
    <text evidence="1">Belongs to the major facilitator superfamily. LplT (TC 2.A.1.42) family.</text>
</comment>
<reference key="1">
    <citation type="journal article" date="2008" name="PLoS Genet.">
        <title>Complete genome sequence of the N2-fixing broad host range endophyte Klebsiella pneumoniae 342 and virulence predictions verified in mice.</title>
        <authorList>
            <person name="Fouts D.E."/>
            <person name="Tyler H.L."/>
            <person name="DeBoy R.T."/>
            <person name="Daugherty S."/>
            <person name="Ren Q."/>
            <person name="Badger J.H."/>
            <person name="Durkin A.S."/>
            <person name="Huot H."/>
            <person name="Shrivastava S."/>
            <person name="Kothari S."/>
            <person name="Dodson R.J."/>
            <person name="Mohamoud Y."/>
            <person name="Khouri H."/>
            <person name="Roesch L.F.W."/>
            <person name="Krogfelt K.A."/>
            <person name="Struve C."/>
            <person name="Triplett E.W."/>
            <person name="Methe B.A."/>
        </authorList>
    </citation>
    <scope>NUCLEOTIDE SEQUENCE [LARGE SCALE GENOMIC DNA]</scope>
    <source>
        <strain>342</strain>
    </source>
</reference>
<evidence type="ECO:0000255" key="1">
    <source>
        <dbReference type="HAMAP-Rule" id="MF_01585"/>
    </source>
</evidence>
<proteinExistence type="inferred from homology"/>
<gene>
    <name evidence="1" type="primary">lplT</name>
    <name type="ordered locus">KPK_0870</name>
</gene>
<dbReference type="EMBL" id="CP000964">
    <property type="protein sequence ID" value="ACI07544.1"/>
    <property type="molecule type" value="Genomic_DNA"/>
</dbReference>
<dbReference type="SMR" id="B5XUP3"/>
<dbReference type="KEGG" id="kpe:KPK_0870"/>
<dbReference type="HOGENOM" id="CLU_047399_0_0_6"/>
<dbReference type="Proteomes" id="UP000001734">
    <property type="component" value="Chromosome"/>
</dbReference>
<dbReference type="GO" id="GO:0005886">
    <property type="term" value="C:plasma membrane"/>
    <property type="evidence" value="ECO:0007669"/>
    <property type="project" value="UniProtKB-SubCell"/>
</dbReference>
<dbReference type="GO" id="GO:0051978">
    <property type="term" value="F:lysophospholipid:sodium symporter activity"/>
    <property type="evidence" value="ECO:0007669"/>
    <property type="project" value="InterPro"/>
</dbReference>
<dbReference type="CDD" id="cd06173">
    <property type="entry name" value="MFS_MefA_like"/>
    <property type="match status" value="1"/>
</dbReference>
<dbReference type="Gene3D" id="1.20.1250.20">
    <property type="entry name" value="MFS general substrate transporter like domains"/>
    <property type="match status" value="1"/>
</dbReference>
<dbReference type="HAMAP" id="MF_01585">
    <property type="entry name" value="MFS_LplT"/>
    <property type="match status" value="1"/>
</dbReference>
<dbReference type="InterPro" id="IPR023727">
    <property type="entry name" value="LysoPLipid__transptr_LplT"/>
</dbReference>
<dbReference type="InterPro" id="IPR011701">
    <property type="entry name" value="MFS"/>
</dbReference>
<dbReference type="InterPro" id="IPR036259">
    <property type="entry name" value="MFS_trans_sf"/>
</dbReference>
<dbReference type="NCBIfam" id="NF008397">
    <property type="entry name" value="PRK11195.1"/>
    <property type="match status" value="1"/>
</dbReference>
<dbReference type="PANTHER" id="PTHR43266">
    <property type="entry name" value="MACROLIDE-EFFLUX PROTEIN"/>
    <property type="match status" value="1"/>
</dbReference>
<dbReference type="PANTHER" id="PTHR43266:SF2">
    <property type="entry name" value="MAJOR FACILITATOR SUPERFAMILY (MFS) PROFILE DOMAIN-CONTAINING PROTEIN"/>
    <property type="match status" value="1"/>
</dbReference>
<dbReference type="Pfam" id="PF07690">
    <property type="entry name" value="MFS_1"/>
    <property type="match status" value="1"/>
</dbReference>
<dbReference type="SUPFAM" id="SSF103473">
    <property type="entry name" value="MFS general substrate transporter"/>
    <property type="match status" value="1"/>
</dbReference>
<accession>B5XUP3</accession>
<keyword id="KW-0997">Cell inner membrane</keyword>
<keyword id="KW-1003">Cell membrane</keyword>
<keyword id="KW-0445">Lipid transport</keyword>
<keyword id="KW-0472">Membrane</keyword>
<keyword id="KW-0812">Transmembrane</keyword>
<keyword id="KW-1133">Transmembrane helix</keyword>
<keyword id="KW-0813">Transport</keyword>
<sequence length="397" mass="41716">MSESVHTNPSLYSKGMLAVICAQFLSAFGDNALLFATLALMKQLYYPEWSQPVLQMLFVGAYILFAPFVGQFADSFAKGRVMMVANGLKLLGAGCICFGVNPFIGYTLVGIGAAAYSPAKYGILGELTTGDKLVKANGLMESSTIAAILLGSMAGGILADWHVLAALIVCALVYGGAVVANLWIPRLPAARPGQSWRFKPMTHSFFSACRTLWRNGETRFSLMGTSLFWGAGVTLRFLLVIWVPVALGITSNAMPTYLNAMVAVGIVLGAGAAAKLVTLETVSRCMPAGILIGIAVMAFAVQQSLLPAFGLLLLLGVFGGFFIVPLNALLQERGKHSVGAGNAIAVQNLGENVAMLLMLGLYSLAVSVGVPPVAVGIGFGAVFAVAIAALWVWGRRK</sequence>
<name>LPLT_KLEP3</name>
<feature type="chain" id="PRO_1000201272" description="Lysophospholipid transporter LplT">
    <location>
        <begin position="1"/>
        <end position="397"/>
    </location>
</feature>
<feature type="transmembrane region" description="Helical" evidence="1">
    <location>
        <begin position="16"/>
        <end position="36"/>
    </location>
</feature>
<feature type="transmembrane region" description="Helical" evidence="1">
    <location>
        <begin position="53"/>
        <end position="73"/>
    </location>
</feature>
<feature type="transmembrane region" description="Helical" evidence="1">
    <location>
        <begin position="91"/>
        <end position="111"/>
    </location>
</feature>
<feature type="transmembrane region" description="Helical" evidence="1">
    <location>
        <begin position="139"/>
        <end position="159"/>
    </location>
</feature>
<feature type="transmembrane region" description="Helical" evidence="1">
    <location>
        <begin position="164"/>
        <end position="184"/>
    </location>
</feature>
<feature type="transmembrane region" description="Helical" evidence="1">
    <location>
        <begin position="227"/>
        <end position="247"/>
    </location>
</feature>
<feature type="transmembrane region" description="Helical" evidence="1">
    <location>
        <begin position="253"/>
        <end position="273"/>
    </location>
</feature>
<feature type="transmembrane region" description="Helical" evidence="1">
    <location>
        <begin position="281"/>
        <end position="301"/>
    </location>
</feature>
<feature type="transmembrane region" description="Helical" evidence="1">
    <location>
        <begin position="305"/>
        <end position="325"/>
    </location>
</feature>
<feature type="transmembrane region" description="Helical" evidence="1">
    <location>
        <begin position="352"/>
        <end position="372"/>
    </location>
</feature>
<feature type="transmembrane region" description="Helical" evidence="1">
    <location>
        <begin position="373"/>
        <end position="393"/>
    </location>
</feature>
<organism>
    <name type="scientific">Klebsiella pneumoniae (strain 342)</name>
    <dbReference type="NCBI Taxonomy" id="507522"/>
    <lineage>
        <taxon>Bacteria</taxon>
        <taxon>Pseudomonadati</taxon>
        <taxon>Pseudomonadota</taxon>
        <taxon>Gammaproteobacteria</taxon>
        <taxon>Enterobacterales</taxon>
        <taxon>Enterobacteriaceae</taxon>
        <taxon>Klebsiella/Raoultella group</taxon>
        <taxon>Klebsiella</taxon>
        <taxon>Klebsiella pneumoniae complex</taxon>
    </lineage>
</organism>